<reference key="1">
    <citation type="journal article" date="2011" name="J. Bacteriol.">
        <title>Comparative genomics of 28 Salmonella enterica isolates: evidence for CRISPR-mediated adaptive sublineage evolution.</title>
        <authorList>
            <person name="Fricke W.F."/>
            <person name="Mammel M.K."/>
            <person name="McDermott P.F."/>
            <person name="Tartera C."/>
            <person name="White D.G."/>
            <person name="Leclerc J.E."/>
            <person name="Ravel J."/>
            <person name="Cebula T.A."/>
        </authorList>
    </citation>
    <scope>NUCLEOTIDE SEQUENCE [LARGE SCALE GENOMIC DNA]</scope>
    <source>
        <strain>SL254</strain>
    </source>
</reference>
<gene>
    <name evidence="1" type="primary">hemL</name>
    <name type="ordered locus">SNSL254_A0223</name>
</gene>
<evidence type="ECO:0000255" key="1">
    <source>
        <dbReference type="HAMAP-Rule" id="MF_00375"/>
    </source>
</evidence>
<name>GSA_SALNS</name>
<organism>
    <name type="scientific">Salmonella newport (strain SL254)</name>
    <dbReference type="NCBI Taxonomy" id="423368"/>
    <lineage>
        <taxon>Bacteria</taxon>
        <taxon>Pseudomonadati</taxon>
        <taxon>Pseudomonadota</taxon>
        <taxon>Gammaproteobacteria</taxon>
        <taxon>Enterobacterales</taxon>
        <taxon>Enterobacteriaceae</taxon>
        <taxon>Salmonella</taxon>
    </lineage>
</organism>
<dbReference type="EC" id="5.4.3.8" evidence="1"/>
<dbReference type="EMBL" id="CP001113">
    <property type="protein sequence ID" value="ACF63379.1"/>
    <property type="molecule type" value="Genomic_DNA"/>
</dbReference>
<dbReference type="RefSeq" id="WP_000045262.1">
    <property type="nucleotide sequence ID" value="NZ_CCMR01000003.1"/>
</dbReference>
<dbReference type="SMR" id="B4SUY4"/>
<dbReference type="KEGG" id="see:SNSL254_A0223"/>
<dbReference type="HOGENOM" id="CLU_016922_1_5_6"/>
<dbReference type="UniPathway" id="UPA00251">
    <property type="reaction ID" value="UER00317"/>
</dbReference>
<dbReference type="Proteomes" id="UP000008824">
    <property type="component" value="Chromosome"/>
</dbReference>
<dbReference type="GO" id="GO:0005737">
    <property type="term" value="C:cytoplasm"/>
    <property type="evidence" value="ECO:0007669"/>
    <property type="project" value="UniProtKB-SubCell"/>
</dbReference>
<dbReference type="GO" id="GO:0042286">
    <property type="term" value="F:glutamate-1-semialdehyde 2,1-aminomutase activity"/>
    <property type="evidence" value="ECO:0007669"/>
    <property type="project" value="UniProtKB-UniRule"/>
</dbReference>
<dbReference type="GO" id="GO:0030170">
    <property type="term" value="F:pyridoxal phosphate binding"/>
    <property type="evidence" value="ECO:0007669"/>
    <property type="project" value="InterPro"/>
</dbReference>
<dbReference type="GO" id="GO:0008483">
    <property type="term" value="F:transaminase activity"/>
    <property type="evidence" value="ECO:0007669"/>
    <property type="project" value="InterPro"/>
</dbReference>
<dbReference type="GO" id="GO:0006782">
    <property type="term" value="P:protoporphyrinogen IX biosynthetic process"/>
    <property type="evidence" value="ECO:0007669"/>
    <property type="project" value="UniProtKB-UniRule"/>
</dbReference>
<dbReference type="CDD" id="cd00610">
    <property type="entry name" value="OAT_like"/>
    <property type="match status" value="1"/>
</dbReference>
<dbReference type="FunFam" id="3.40.640.10:FF:000021">
    <property type="entry name" value="Glutamate-1-semialdehyde 2,1-aminomutase"/>
    <property type="match status" value="1"/>
</dbReference>
<dbReference type="FunFam" id="3.90.1150.10:FF:000012">
    <property type="entry name" value="Glutamate-1-semialdehyde 2,1-aminomutase"/>
    <property type="match status" value="1"/>
</dbReference>
<dbReference type="Gene3D" id="3.90.1150.10">
    <property type="entry name" value="Aspartate Aminotransferase, domain 1"/>
    <property type="match status" value="1"/>
</dbReference>
<dbReference type="Gene3D" id="3.40.640.10">
    <property type="entry name" value="Type I PLP-dependent aspartate aminotransferase-like (Major domain)"/>
    <property type="match status" value="1"/>
</dbReference>
<dbReference type="HAMAP" id="MF_00375">
    <property type="entry name" value="HemL_aminotrans_3"/>
    <property type="match status" value="1"/>
</dbReference>
<dbReference type="InterPro" id="IPR004639">
    <property type="entry name" value="4pyrrol_synth_GluAld_NH2Trfase"/>
</dbReference>
<dbReference type="InterPro" id="IPR005814">
    <property type="entry name" value="Aminotrans_3"/>
</dbReference>
<dbReference type="InterPro" id="IPR049704">
    <property type="entry name" value="Aminotrans_3_PPA_site"/>
</dbReference>
<dbReference type="InterPro" id="IPR015424">
    <property type="entry name" value="PyrdxlP-dep_Trfase"/>
</dbReference>
<dbReference type="InterPro" id="IPR015421">
    <property type="entry name" value="PyrdxlP-dep_Trfase_major"/>
</dbReference>
<dbReference type="InterPro" id="IPR015422">
    <property type="entry name" value="PyrdxlP-dep_Trfase_small"/>
</dbReference>
<dbReference type="NCBIfam" id="TIGR00713">
    <property type="entry name" value="hemL"/>
    <property type="match status" value="1"/>
</dbReference>
<dbReference type="NCBIfam" id="NF000818">
    <property type="entry name" value="PRK00062.1"/>
    <property type="match status" value="1"/>
</dbReference>
<dbReference type="PANTHER" id="PTHR43713">
    <property type="entry name" value="GLUTAMATE-1-SEMIALDEHYDE 2,1-AMINOMUTASE"/>
    <property type="match status" value="1"/>
</dbReference>
<dbReference type="PANTHER" id="PTHR43713:SF3">
    <property type="entry name" value="GLUTAMATE-1-SEMIALDEHYDE 2,1-AMINOMUTASE 1, CHLOROPLASTIC-RELATED"/>
    <property type="match status" value="1"/>
</dbReference>
<dbReference type="Pfam" id="PF00202">
    <property type="entry name" value="Aminotran_3"/>
    <property type="match status" value="1"/>
</dbReference>
<dbReference type="SUPFAM" id="SSF53383">
    <property type="entry name" value="PLP-dependent transferases"/>
    <property type="match status" value="1"/>
</dbReference>
<dbReference type="PROSITE" id="PS00600">
    <property type="entry name" value="AA_TRANSFER_CLASS_3"/>
    <property type="match status" value="1"/>
</dbReference>
<keyword id="KW-0963">Cytoplasm</keyword>
<keyword id="KW-0413">Isomerase</keyword>
<keyword id="KW-0627">Porphyrin biosynthesis</keyword>
<keyword id="KW-0663">Pyridoxal phosphate</keyword>
<protein>
    <recommendedName>
        <fullName evidence="1">Glutamate-1-semialdehyde 2,1-aminomutase</fullName>
        <shortName evidence="1">GSA</shortName>
        <ecNumber evidence="1">5.4.3.8</ecNumber>
    </recommendedName>
    <alternativeName>
        <fullName evidence="1">Glutamate-1-semialdehyde aminotransferase</fullName>
        <shortName evidence="1">GSA-AT</shortName>
    </alternativeName>
</protein>
<comment type="catalytic activity">
    <reaction evidence="1">
        <text>(S)-4-amino-5-oxopentanoate = 5-aminolevulinate</text>
        <dbReference type="Rhea" id="RHEA:14265"/>
        <dbReference type="ChEBI" id="CHEBI:57501"/>
        <dbReference type="ChEBI" id="CHEBI:356416"/>
        <dbReference type="EC" id="5.4.3.8"/>
    </reaction>
</comment>
<comment type="cofactor">
    <cofactor evidence="1">
        <name>pyridoxal 5'-phosphate</name>
        <dbReference type="ChEBI" id="CHEBI:597326"/>
    </cofactor>
</comment>
<comment type="pathway">
    <text evidence="1">Porphyrin-containing compound metabolism; protoporphyrin-IX biosynthesis; 5-aminolevulinate from L-glutamyl-tRNA(Glu): step 2/2.</text>
</comment>
<comment type="subunit">
    <text evidence="1">Homodimer.</text>
</comment>
<comment type="subcellular location">
    <subcellularLocation>
        <location evidence="1">Cytoplasm</location>
    </subcellularLocation>
</comment>
<comment type="similarity">
    <text evidence="1">Belongs to the class-III pyridoxal-phosphate-dependent aminotransferase family. HemL subfamily.</text>
</comment>
<sequence length="426" mass="45421">MSKSENLYSAARELIPGGVNSPVRAFTGVGGTPLFIEKADGAYLYDVDGKAYIDYVGSWGPMVLGHNHPAIRNAVIEAAERGLSFGAPTEMEVKMAELVTNLVPTMDMVRMVNSGTEATMSAIRLARGFTGRDKIIKFEGCYHGHADCLLVKAGSGALTLGQPNSPGVPADFAKHTLTCTYNDLTSVRAAFEQYPQEIACIIVEPVAGNMNCVPPLPEFLPGLRALCDEFGALLIIDEVMTGFRVALAGAQDYYGVVPDLTCLGKIIGGGMPVGAFGGRRDVMDALAPTGPVYQAGTLSGNPIAMAAGFACLNEVAQPGIHETLDELTTRLAEGLLEAAEEANIPLVVNHVGGMFGIFFTDAESVTCYQDVMACDVERFKRFFHLMLEEGVYLAPSAFEAGFMSVAHSEEDINNTIDAARRVFAKL</sequence>
<feature type="chain" id="PRO_1000121918" description="Glutamate-1-semialdehyde 2,1-aminomutase">
    <location>
        <begin position="1"/>
        <end position="426"/>
    </location>
</feature>
<feature type="modified residue" description="N6-(pyridoxal phosphate)lysine" evidence="1">
    <location>
        <position position="265"/>
    </location>
</feature>
<accession>B4SUY4</accession>
<proteinExistence type="inferred from homology"/>